<keyword id="KW-0521">NADP</keyword>
<keyword id="KW-0560">Oxidoreductase</keyword>
<keyword id="KW-1185">Reference proteome</keyword>
<reference key="1">
    <citation type="journal article" date="2002" name="Plant Mol. Biol.">
        <title>Expression patterns of two tobacco isoflavone reductase-like genes and their possible roles in secondary metabolism in tobacco.</title>
        <authorList>
            <person name="Shoji T."/>
            <person name="Winz R."/>
            <person name="Iwase T."/>
            <person name="Nakajima K."/>
            <person name="Yamada Y."/>
            <person name="Hashimoto T."/>
        </authorList>
    </citation>
    <scope>NUCLEOTIDE SEQUENCE [MRNA]</scope>
    <scope>FUNCTION</scope>
    <scope>CATALYTIC ACTIVITY</scope>
    <scope>TISSUE SPECIFICITY</scope>
    <source>
        <strain>cv. Petit Havana SR1</strain>
    </source>
</reference>
<feature type="chain" id="PRO_0000442617" description="Phenylcoumaran benzylic ether reductase TP7">
    <location>
        <begin position="1"/>
        <end position="308"/>
    </location>
</feature>
<feature type="active site" description="Proton acceptor" evidence="1">
    <location>
        <position position="133"/>
    </location>
</feature>
<feature type="binding site" evidence="1">
    <location>
        <begin position="11"/>
        <end position="17"/>
    </location>
    <ligand>
        <name>NADP(+)</name>
        <dbReference type="ChEBI" id="CHEBI:58349"/>
    </ligand>
</feature>
<feature type="binding site" evidence="1">
    <location>
        <position position="36"/>
    </location>
    <ligand>
        <name>NADP(+)</name>
        <dbReference type="ChEBI" id="CHEBI:58349"/>
    </ligand>
</feature>
<feature type="binding site" evidence="1">
    <location>
        <position position="45"/>
    </location>
    <ligand>
        <name>NADP(+)</name>
        <dbReference type="ChEBI" id="CHEBI:58349"/>
    </ligand>
</feature>
<feature type="binding site" evidence="1">
    <location>
        <position position="137"/>
    </location>
    <ligand>
        <name>NADP(+)</name>
        <dbReference type="ChEBI" id="CHEBI:58349"/>
    </ligand>
</feature>
<sequence>MAEKSKVLIIGGTGYIGKFVVEASAKSGHPTFALVRESTLSDPVKSKIVENFKNLGVTILHGDLYDHESLVKAIKQVDVVISTMGMMQLGDQVKLIAAIKEAGNIKRFFPSEFGMDVDKTNAVEPAKSAFAVKVQIRRAIEAEGIPYTYVSCNCFAGYFLPTMVQPGATVPPRDKVIIPGDGNVKAVFNEEHDIGTYTIKAVDDPRTLNKTLYIKPPKNTLSFNELVAMWEKMIGKTLEKIYIPEEQILKDIETSPMPLPVILAINHATFVKGDQTNFKIEPSFGVEASELYPDVKYTTVEDYLGHFV</sequence>
<protein>
    <recommendedName>
        <fullName evidence="4">Phenylcoumaran benzylic ether reductase TP7</fullName>
        <shortName evidence="4">NtPCBER</shortName>
        <ecNumber evidence="2">1.23.1.-</ecNumber>
    </recommendedName>
    <alternativeName>
        <fullName evidence="4">Protein TOBACCO PETAL 7</fullName>
    </alternativeName>
</protein>
<evidence type="ECO:0000250" key="1">
    <source>
        <dbReference type="UniProtKB" id="Q9LD14"/>
    </source>
</evidence>
<evidence type="ECO:0000269" key="2">
    <source>
    </source>
</evidence>
<evidence type="ECO:0000303" key="3">
    <source>
    </source>
</evidence>
<evidence type="ECO:0000305" key="4"/>
<organism>
    <name type="scientific">Nicotiana tabacum</name>
    <name type="common">Common tobacco</name>
    <dbReference type="NCBI Taxonomy" id="4097"/>
    <lineage>
        <taxon>Eukaryota</taxon>
        <taxon>Viridiplantae</taxon>
        <taxon>Streptophyta</taxon>
        <taxon>Embryophyta</taxon>
        <taxon>Tracheophyta</taxon>
        <taxon>Spermatophyta</taxon>
        <taxon>Magnoliopsida</taxon>
        <taxon>eudicotyledons</taxon>
        <taxon>Gunneridae</taxon>
        <taxon>Pentapetalae</taxon>
        <taxon>asterids</taxon>
        <taxon>lamiids</taxon>
        <taxon>Solanales</taxon>
        <taxon>Solanaceae</taxon>
        <taxon>Nicotianoideae</taxon>
        <taxon>Nicotianeae</taxon>
        <taxon>Nicotiana</taxon>
    </lineage>
</organism>
<accession>B6VRE8</accession>
<name>TP7_TOBAC</name>
<gene>
    <name evidence="3" type="primary">TP7</name>
</gene>
<dbReference type="EC" id="1.23.1.-" evidence="2"/>
<dbReference type="EMBL" id="AB445398">
    <property type="protein sequence ID" value="BAG84267.1"/>
    <property type="molecule type" value="mRNA"/>
</dbReference>
<dbReference type="RefSeq" id="NP_001313018.1">
    <property type="nucleotide sequence ID" value="NM_001326089.1"/>
</dbReference>
<dbReference type="SMR" id="B6VRE8"/>
<dbReference type="STRING" id="4097.B6VRE8"/>
<dbReference type="PaxDb" id="4097-B6VRE8"/>
<dbReference type="GeneID" id="107822129"/>
<dbReference type="KEGG" id="nta:107822129"/>
<dbReference type="OMA" id="DYWMSWG"/>
<dbReference type="OrthoDB" id="419598at2759"/>
<dbReference type="PhylomeDB" id="B6VRE8"/>
<dbReference type="Proteomes" id="UP000084051">
    <property type="component" value="Unplaced"/>
</dbReference>
<dbReference type="GO" id="GO:0050664">
    <property type="term" value="F:oxidoreductase activity, acting on NAD(P)H, oxygen as acceptor"/>
    <property type="evidence" value="ECO:0000314"/>
    <property type="project" value="UniProtKB"/>
</dbReference>
<dbReference type="GO" id="GO:0009807">
    <property type="term" value="P:lignan biosynthetic process"/>
    <property type="evidence" value="ECO:0000314"/>
    <property type="project" value="UniProtKB"/>
</dbReference>
<dbReference type="CDD" id="cd05259">
    <property type="entry name" value="PCBER_SDR_a"/>
    <property type="match status" value="1"/>
</dbReference>
<dbReference type="FunFam" id="3.40.50.720:FF:000299">
    <property type="entry name" value="Bifunctional pinoresinol-lariciresinol reductase 1"/>
    <property type="match status" value="1"/>
</dbReference>
<dbReference type="Gene3D" id="3.40.50.720">
    <property type="entry name" value="NAD(P)-binding Rossmann-like Domain"/>
    <property type="match status" value="1"/>
</dbReference>
<dbReference type="Gene3D" id="3.90.25.10">
    <property type="entry name" value="UDP-galactose 4-epimerase, domain 1"/>
    <property type="match status" value="1"/>
</dbReference>
<dbReference type="InterPro" id="IPR036291">
    <property type="entry name" value="NAD(P)-bd_dom_sf"/>
</dbReference>
<dbReference type="InterPro" id="IPR008030">
    <property type="entry name" value="NmrA-like"/>
</dbReference>
<dbReference type="InterPro" id="IPR050608">
    <property type="entry name" value="NmrA-type/Isoflavone_red_sf"/>
</dbReference>
<dbReference type="InterPro" id="IPR045312">
    <property type="entry name" value="PCBER-like"/>
</dbReference>
<dbReference type="PANTHER" id="PTHR43349:SF93">
    <property type="entry name" value="ISOFLAVONE REDUCTASE HOMOLOG P3-RELATED"/>
    <property type="match status" value="1"/>
</dbReference>
<dbReference type="PANTHER" id="PTHR43349">
    <property type="entry name" value="PINORESINOL REDUCTASE-RELATED"/>
    <property type="match status" value="1"/>
</dbReference>
<dbReference type="Pfam" id="PF05368">
    <property type="entry name" value="NmrA"/>
    <property type="match status" value="1"/>
</dbReference>
<dbReference type="SUPFAM" id="SSF51735">
    <property type="entry name" value="NAD(P)-binding Rossmann-fold domains"/>
    <property type="match status" value="1"/>
</dbReference>
<comment type="function">
    <text evidence="2">Oxidoreductase involved in lignan biosynthesis. Catalyzes the NADPH-dependent reduction of phenylcoumaran benzylic ethers. Converts dehydrodiconiferyl alcohol (DDC) to isodihydrodehydrodiconiferyl alcohol (IDDDC), and dihydrodehydrodiconiferyl alcohol (DDDC) to tetrahydrodehydrodiconiferyl alcohol (TDDC).</text>
</comment>
<comment type="catalytic activity">
    <reaction evidence="2">
        <text>(-)-dehydrodiconiferyl alcohol + NADPH + H(+) = (S)-isodihydrodehydrodiconiferyl alcohol + NADP(+)</text>
        <dbReference type="Rhea" id="RHEA:59440"/>
        <dbReference type="ChEBI" id="CHEBI:15378"/>
        <dbReference type="ChEBI" id="CHEBI:57783"/>
        <dbReference type="ChEBI" id="CHEBI:58349"/>
        <dbReference type="ChEBI" id="CHEBI:70467"/>
        <dbReference type="ChEBI" id="CHEBI:143259"/>
    </reaction>
</comment>
<comment type="catalytic activity">
    <reaction evidence="2">
        <text>(+)-dehydrodiconiferyl alcohol + NADPH + H(+) = (R)-isodihydrodehydrodiconiferyl alcohol + NADP(+)</text>
        <dbReference type="Rhea" id="RHEA:59844"/>
        <dbReference type="ChEBI" id="CHEBI:15378"/>
        <dbReference type="ChEBI" id="CHEBI:57783"/>
        <dbReference type="ChEBI" id="CHEBI:58349"/>
        <dbReference type="ChEBI" id="CHEBI:143256"/>
        <dbReference type="ChEBI" id="CHEBI:143260"/>
    </reaction>
</comment>
<comment type="catalytic activity">
    <reaction evidence="2">
        <text>(2R,3S)-dihydrodehydrodiconiferyl alcohol + NADPH + H(+) = (S)-tetrahydrodehydrodiconiferyl alcohol + NADP(+)</text>
        <dbReference type="Rhea" id="RHEA:59848"/>
        <dbReference type="ChEBI" id="CHEBI:15378"/>
        <dbReference type="ChEBI" id="CHEBI:57783"/>
        <dbReference type="ChEBI" id="CHEBI:58349"/>
        <dbReference type="ChEBI" id="CHEBI:143258"/>
        <dbReference type="ChEBI" id="CHEBI:143262"/>
    </reaction>
</comment>
<comment type="catalytic activity">
    <reaction evidence="2">
        <text>(2S,3R)-dihydrodehydrodiconiferyl alcohol + NADPH + H(+) = (R)-tetrahydrodehydrodiconiferyl alcohol + NADP(+)</text>
        <dbReference type="Rhea" id="RHEA:59852"/>
        <dbReference type="ChEBI" id="CHEBI:15378"/>
        <dbReference type="ChEBI" id="CHEBI:57783"/>
        <dbReference type="ChEBI" id="CHEBI:58349"/>
        <dbReference type="ChEBI" id="CHEBI:143257"/>
        <dbReference type="ChEBI" id="CHEBI:143263"/>
    </reaction>
</comment>
<comment type="tissue specificity">
    <text evidence="2">Expressed in flowers. Expressed at low levels in stems.</text>
</comment>
<comment type="similarity">
    <text evidence="4">Belongs to the NmrA-type oxidoreductase family. Isoflavone reductase subfamily.</text>
</comment>
<proteinExistence type="evidence at protein level"/>